<organism>
    <name type="scientific">Synechococcus sp. (strain RCC307)</name>
    <dbReference type="NCBI Taxonomy" id="316278"/>
    <lineage>
        <taxon>Bacteria</taxon>
        <taxon>Bacillati</taxon>
        <taxon>Cyanobacteriota</taxon>
        <taxon>Cyanophyceae</taxon>
        <taxon>Synechococcales</taxon>
        <taxon>Synechococcaceae</taxon>
        <taxon>Synechococcus</taxon>
    </lineage>
</organism>
<reference key="1">
    <citation type="submission" date="2006-05" db="EMBL/GenBank/DDBJ databases">
        <authorList>
            <consortium name="Genoscope"/>
        </authorList>
    </citation>
    <scope>NUCLEOTIDE SEQUENCE [LARGE SCALE GENOMIC DNA]</scope>
    <source>
        <strain>RCC307</strain>
    </source>
</reference>
<keyword id="KW-0249">Electron transport</keyword>
<keyword id="KW-0472">Membrane</keyword>
<keyword id="KW-0602">Photosynthesis</keyword>
<keyword id="KW-0604">Photosystem II</keyword>
<keyword id="KW-1185">Reference proteome</keyword>
<keyword id="KW-0732">Signal</keyword>
<keyword id="KW-0793">Thylakoid</keyword>
<keyword id="KW-0813">Transport</keyword>
<comment type="function">
    <text evidence="1">One of the extrinsic, lumenal subunits of photosystem II (PSII). PSII is a light-driven water plastoquinone oxidoreductase, using light energy to abstract electrons from H(2)O, generating a proton gradient subsequently used for ATP formation. The extrinsic proteins stabilize the structure of photosystem II oxygen-evolving complex (OEC), the ion environment of oxygen evolution and protect the OEC against heat-induced inactivation.</text>
</comment>
<comment type="subunit">
    <text evidence="1">PSII is composed of 1 copy each of membrane proteins PsbA, PsbB, PsbC, PsbD, PsbE, PsbF, PsbH, PsbI, PsbJ, PsbK, PsbL, PsbM, PsbT, PsbX, PsbY, PsbZ, Psb30/Ycf12, peripheral proteins PsbO, CyanoQ (PsbQ), PsbU, PsbV and a large number of cofactors. It forms dimeric complexes.</text>
</comment>
<comment type="subcellular location">
    <subcellularLocation>
        <location evidence="1">Cellular thylakoid membrane</location>
        <topology evidence="1">Peripheral membrane protein</topology>
        <orientation evidence="1">Lumenal side</orientation>
    </subcellularLocation>
</comment>
<comment type="similarity">
    <text evidence="1">Belongs to the PsbU family.</text>
</comment>
<sequence length="127" mass="14495">MSRLFRRLSTLLLCSLLVLGVWLTQPLSVQAAEIRNKVDDKIAETAGKVDLNNASVRRFQQYPGMYPTLAGKIVVGGPYDQVEDVLKLDLTERQKELFEKYKENFTVTDPEIALNEGFDRINDGQYR</sequence>
<proteinExistence type="inferred from homology"/>
<evidence type="ECO:0000255" key="1">
    <source>
        <dbReference type="HAMAP-Rule" id="MF_00589"/>
    </source>
</evidence>
<protein>
    <recommendedName>
        <fullName evidence="1">Photosystem II extrinsic protein U</fullName>
        <shortName evidence="1">PSII-U</shortName>
        <shortName evidence="1">PsbU</shortName>
    </recommendedName>
    <alternativeName>
        <fullName evidence="1">Photosystem II 12 kDa extrinsic protein</fullName>
        <shortName evidence="1">PS II complex 12 kDa extrinsic protein</shortName>
    </alternativeName>
</protein>
<name>PSBU_SYNR3</name>
<feature type="signal peptide" evidence="1">
    <location>
        <begin position="1"/>
        <end position="31"/>
    </location>
</feature>
<feature type="chain" id="PRO_1000025487" description="Photosystem II extrinsic protein U">
    <location>
        <begin position="32"/>
        <end position="127"/>
    </location>
</feature>
<gene>
    <name evidence="1" type="primary">psbU</name>
    <name type="ordered locus">SynRCC307_0304</name>
</gene>
<accession>A5GQP8</accession>
<dbReference type="EMBL" id="CT978603">
    <property type="protein sequence ID" value="CAK27207.1"/>
    <property type="molecule type" value="Genomic_DNA"/>
</dbReference>
<dbReference type="SMR" id="A5GQP8"/>
<dbReference type="STRING" id="316278.SynRCC307_0304"/>
<dbReference type="KEGG" id="syr:SynRCC307_0304"/>
<dbReference type="eggNOG" id="COG1555">
    <property type="taxonomic scope" value="Bacteria"/>
</dbReference>
<dbReference type="HOGENOM" id="CLU_141240_1_0_3"/>
<dbReference type="OrthoDB" id="463369at2"/>
<dbReference type="Proteomes" id="UP000001115">
    <property type="component" value="Chromosome"/>
</dbReference>
<dbReference type="GO" id="GO:0019898">
    <property type="term" value="C:extrinsic component of membrane"/>
    <property type="evidence" value="ECO:0007669"/>
    <property type="project" value="InterPro"/>
</dbReference>
<dbReference type="GO" id="GO:0009654">
    <property type="term" value="C:photosystem II oxygen evolving complex"/>
    <property type="evidence" value="ECO:0007669"/>
    <property type="project" value="InterPro"/>
</dbReference>
<dbReference type="GO" id="GO:0031676">
    <property type="term" value="C:plasma membrane-derived thylakoid membrane"/>
    <property type="evidence" value="ECO:0007669"/>
    <property type="project" value="UniProtKB-SubCell"/>
</dbReference>
<dbReference type="GO" id="GO:0015979">
    <property type="term" value="P:photosynthesis"/>
    <property type="evidence" value="ECO:0007669"/>
    <property type="project" value="UniProtKB-UniRule"/>
</dbReference>
<dbReference type="GO" id="GO:0042549">
    <property type="term" value="P:photosystem II stabilization"/>
    <property type="evidence" value="ECO:0007669"/>
    <property type="project" value="InterPro"/>
</dbReference>
<dbReference type="Gene3D" id="1.10.150.320">
    <property type="entry name" value="Photosystem II 12 kDa extrinsic protein"/>
    <property type="match status" value="1"/>
</dbReference>
<dbReference type="HAMAP" id="MF_00589">
    <property type="entry name" value="PSII_PsbU"/>
    <property type="match status" value="1"/>
</dbReference>
<dbReference type="InterPro" id="IPR010527">
    <property type="entry name" value="PSII_PsbU"/>
</dbReference>
<dbReference type="NCBIfam" id="NF002708">
    <property type="entry name" value="PRK02515.1"/>
    <property type="match status" value="1"/>
</dbReference>
<dbReference type="Pfam" id="PF06514">
    <property type="entry name" value="PsbU"/>
    <property type="match status" value="1"/>
</dbReference>
<dbReference type="SUPFAM" id="SSF81585">
    <property type="entry name" value="PsbU/PolX domain-like"/>
    <property type="match status" value="1"/>
</dbReference>